<dbReference type="EMBL" id="AM884177">
    <property type="protein sequence ID" value="CAP07163.1"/>
    <property type="molecule type" value="Genomic_DNA"/>
</dbReference>
<dbReference type="RefSeq" id="WP_009873866.1">
    <property type="nucleotide sequence ID" value="NC_010280.2"/>
</dbReference>
<dbReference type="SMR" id="B0BCE8"/>
<dbReference type="KEGG" id="ctl:CTLon_0766"/>
<dbReference type="HOGENOM" id="CLU_103849_1_2_0"/>
<dbReference type="Proteomes" id="UP001154401">
    <property type="component" value="Chromosome"/>
</dbReference>
<dbReference type="GO" id="GO:0005829">
    <property type="term" value="C:cytosol"/>
    <property type="evidence" value="ECO:0007669"/>
    <property type="project" value="TreeGrafter"/>
</dbReference>
<dbReference type="GO" id="GO:0015935">
    <property type="term" value="C:small ribosomal subunit"/>
    <property type="evidence" value="ECO:0007669"/>
    <property type="project" value="TreeGrafter"/>
</dbReference>
<dbReference type="GO" id="GO:0019843">
    <property type="term" value="F:rRNA binding"/>
    <property type="evidence" value="ECO:0007669"/>
    <property type="project" value="UniProtKB-UniRule"/>
</dbReference>
<dbReference type="GO" id="GO:0003735">
    <property type="term" value="F:structural constituent of ribosome"/>
    <property type="evidence" value="ECO:0007669"/>
    <property type="project" value="InterPro"/>
</dbReference>
<dbReference type="GO" id="GO:0000049">
    <property type="term" value="F:tRNA binding"/>
    <property type="evidence" value="ECO:0007669"/>
    <property type="project" value="UniProtKB-UniRule"/>
</dbReference>
<dbReference type="GO" id="GO:0006412">
    <property type="term" value="P:translation"/>
    <property type="evidence" value="ECO:0007669"/>
    <property type="project" value="UniProtKB-UniRule"/>
</dbReference>
<dbReference type="FunFam" id="1.10.8.50:FF:000001">
    <property type="entry name" value="30S ribosomal protein S13"/>
    <property type="match status" value="1"/>
</dbReference>
<dbReference type="FunFam" id="4.10.910.10:FF:000001">
    <property type="entry name" value="30S ribosomal protein S13"/>
    <property type="match status" value="1"/>
</dbReference>
<dbReference type="Gene3D" id="1.10.8.50">
    <property type="match status" value="1"/>
</dbReference>
<dbReference type="Gene3D" id="4.10.910.10">
    <property type="entry name" value="30s ribosomal protein s13, domain 2"/>
    <property type="match status" value="1"/>
</dbReference>
<dbReference type="HAMAP" id="MF_01315">
    <property type="entry name" value="Ribosomal_uS13"/>
    <property type="match status" value="1"/>
</dbReference>
<dbReference type="InterPro" id="IPR027437">
    <property type="entry name" value="Rbsml_uS13_C"/>
</dbReference>
<dbReference type="InterPro" id="IPR001892">
    <property type="entry name" value="Ribosomal_uS13"/>
</dbReference>
<dbReference type="InterPro" id="IPR010979">
    <property type="entry name" value="Ribosomal_uS13-like_H2TH"/>
</dbReference>
<dbReference type="InterPro" id="IPR019980">
    <property type="entry name" value="Ribosomal_uS13_bac-type"/>
</dbReference>
<dbReference type="InterPro" id="IPR018269">
    <property type="entry name" value="Ribosomal_uS13_CS"/>
</dbReference>
<dbReference type="NCBIfam" id="TIGR03631">
    <property type="entry name" value="uS13_bact"/>
    <property type="match status" value="1"/>
</dbReference>
<dbReference type="PANTHER" id="PTHR10871">
    <property type="entry name" value="30S RIBOSOMAL PROTEIN S13/40S RIBOSOMAL PROTEIN S18"/>
    <property type="match status" value="1"/>
</dbReference>
<dbReference type="PANTHER" id="PTHR10871:SF1">
    <property type="entry name" value="SMALL RIBOSOMAL SUBUNIT PROTEIN US13M"/>
    <property type="match status" value="1"/>
</dbReference>
<dbReference type="Pfam" id="PF00416">
    <property type="entry name" value="Ribosomal_S13"/>
    <property type="match status" value="1"/>
</dbReference>
<dbReference type="PIRSF" id="PIRSF002134">
    <property type="entry name" value="Ribosomal_S13"/>
    <property type="match status" value="1"/>
</dbReference>
<dbReference type="SUPFAM" id="SSF46946">
    <property type="entry name" value="S13-like H2TH domain"/>
    <property type="match status" value="1"/>
</dbReference>
<dbReference type="PROSITE" id="PS00646">
    <property type="entry name" value="RIBOSOMAL_S13_1"/>
    <property type="match status" value="1"/>
</dbReference>
<dbReference type="PROSITE" id="PS50159">
    <property type="entry name" value="RIBOSOMAL_S13_2"/>
    <property type="match status" value="1"/>
</dbReference>
<feature type="chain" id="PRO_1000141241" description="Small ribosomal subunit protein uS13">
    <location>
        <begin position="1"/>
        <end position="122"/>
    </location>
</feature>
<feature type="region of interest" description="Disordered" evidence="2">
    <location>
        <begin position="96"/>
        <end position="122"/>
    </location>
</feature>
<feature type="compositionally biased region" description="Basic residues" evidence="2">
    <location>
        <begin position="101"/>
        <end position="122"/>
    </location>
</feature>
<gene>
    <name evidence="1" type="primary">rpsM</name>
    <name type="ordered locus">CTLon_0766</name>
</gene>
<protein>
    <recommendedName>
        <fullName evidence="1">Small ribosomal subunit protein uS13</fullName>
    </recommendedName>
    <alternativeName>
        <fullName evidence="3">30S ribosomal protein S13</fullName>
    </alternativeName>
</protein>
<proteinExistence type="inferred from homology"/>
<organism>
    <name type="scientific">Chlamydia trachomatis serovar L2b (strain UCH-1/proctitis)</name>
    <dbReference type="NCBI Taxonomy" id="471473"/>
    <lineage>
        <taxon>Bacteria</taxon>
        <taxon>Pseudomonadati</taxon>
        <taxon>Chlamydiota</taxon>
        <taxon>Chlamydiia</taxon>
        <taxon>Chlamydiales</taxon>
        <taxon>Chlamydiaceae</taxon>
        <taxon>Chlamydia/Chlamydophila group</taxon>
        <taxon>Chlamydia</taxon>
    </lineage>
</organism>
<comment type="function">
    <text evidence="1">Located at the top of the head of the 30S subunit, it contacts several helices of the 16S rRNA. In the 70S ribosome it contacts the 23S rRNA (bridge B1a) and protein L5 of the 50S subunit (bridge B1b), connecting the 2 subunits; these bridges are implicated in subunit movement. Contacts the tRNAs in the A and P-sites.</text>
</comment>
<comment type="subunit">
    <text evidence="1">Part of the 30S ribosomal subunit. Forms a loose heterodimer with protein S19. Forms two bridges to the 50S subunit in the 70S ribosome.</text>
</comment>
<comment type="similarity">
    <text evidence="1">Belongs to the universal ribosomal protein uS13 family.</text>
</comment>
<keyword id="KW-0687">Ribonucleoprotein</keyword>
<keyword id="KW-0689">Ribosomal protein</keyword>
<keyword id="KW-0694">RNA-binding</keyword>
<keyword id="KW-0699">rRNA-binding</keyword>
<keyword id="KW-0820">tRNA-binding</keyword>
<reference key="1">
    <citation type="journal article" date="2008" name="Genome Res.">
        <title>Chlamydia trachomatis: genome sequence analysis of lymphogranuloma venereum isolates.</title>
        <authorList>
            <person name="Thomson N.R."/>
            <person name="Holden M.T.G."/>
            <person name="Carder C."/>
            <person name="Lennard N."/>
            <person name="Lockey S.J."/>
            <person name="Marsh P."/>
            <person name="Skipp P."/>
            <person name="O'Connor C.D."/>
            <person name="Goodhead I."/>
            <person name="Norbertzcak H."/>
            <person name="Harris B."/>
            <person name="Ormond D."/>
            <person name="Rance R."/>
            <person name="Quail M.A."/>
            <person name="Parkhill J."/>
            <person name="Stephens R.S."/>
            <person name="Clarke I.N."/>
        </authorList>
    </citation>
    <scope>NUCLEOTIDE SEQUENCE [LARGE SCALE GENOMIC DNA]</scope>
    <source>
        <strain>UCH-1/proctitis</strain>
    </source>
</reference>
<accession>B0BCE8</accession>
<evidence type="ECO:0000255" key="1">
    <source>
        <dbReference type="HAMAP-Rule" id="MF_01315"/>
    </source>
</evidence>
<evidence type="ECO:0000256" key="2">
    <source>
        <dbReference type="SAM" id="MobiDB-lite"/>
    </source>
</evidence>
<evidence type="ECO:0000305" key="3"/>
<name>RS13_CHLTB</name>
<sequence length="122" mass="13895">MPRIIGIDIPAKKKLKISLTYIYGIGPALSKEIIARLQLNPEARAAELTEEEVGRLNALLQSDYVVEGDLRRRVQSDIKRLITIHAYRGQRHRLSLPVRGQRTKTNSRTRKGKRKTIAGKKK</sequence>